<feature type="chain" id="PRO_0000366864" description="Ribosomal RNA large subunit methyltransferase K/L">
    <location>
        <begin position="1"/>
        <end position="724"/>
    </location>
</feature>
<feature type="domain" description="THUMP" evidence="1">
    <location>
        <begin position="42"/>
        <end position="153"/>
    </location>
</feature>
<reference key="1">
    <citation type="journal article" date="2003" name="J. Bacteriol.">
        <title>Comparative analyses of the complete genome sequences of Pierce's disease and citrus variegated chlorosis strains of Xylella fastidiosa.</title>
        <authorList>
            <person name="Van Sluys M.A."/>
            <person name="de Oliveira M.C."/>
            <person name="Monteiro-Vitorello C.B."/>
            <person name="Miyaki C.Y."/>
            <person name="Furlan L.R."/>
            <person name="Camargo L.E.A."/>
            <person name="da Silva A.C.R."/>
            <person name="Moon D.H."/>
            <person name="Takita M.A."/>
            <person name="Lemos E.G.M."/>
            <person name="Machado M.A."/>
            <person name="Ferro M.I.T."/>
            <person name="da Silva F.R."/>
            <person name="Goldman M.H.S."/>
            <person name="Goldman G.H."/>
            <person name="Lemos M.V.F."/>
            <person name="El-Dorry H."/>
            <person name="Tsai S.M."/>
            <person name="Carrer H."/>
            <person name="Carraro D.M."/>
            <person name="de Oliveira R.C."/>
            <person name="Nunes L.R."/>
            <person name="Siqueira W.J."/>
            <person name="Coutinho L.L."/>
            <person name="Kimura E.T."/>
            <person name="Ferro E.S."/>
            <person name="Harakava R."/>
            <person name="Kuramae E.E."/>
            <person name="Marino C.L."/>
            <person name="Giglioti E."/>
            <person name="Abreu I.L."/>
            <person name="Alves L.M.C."/>
            <person name="do Amaral A.M."/>
            <person name="Baia G.S."/>
            <person name="Blanco S.R."/>
            <person name="Brito M.S."/>
            <person name="Cannavan F.S."/>
            <person name="Celestino A.V."/>
            <person name="da Cunha A.F."/>
            <person name="Fenille R.C."/>
            <person name="Ferro J.A."/>
            <person name="Formighieri E.F."/>
            <person name="Kishi L.T."/>
            <person name="Leoni S.G."/>
            <person name="Oliveira A.R."/>
            <person name="Rosa V.E. Jr."/>
            <person name="Sassaki F.T."/>
            <person name="Sena J.A.D."/>
            <person name="de Souza A.A."/>
            <person name="Truffi D."/>
            <person name="Tsukumo F."/>
            <person name="Yanai G.M."/>
            <person name="Zaros L.G."/>
            <person name="Civerolo E.L."/>
            <person name="Simpson A.J.G."/>
            <person name="Almeida N.F. Jr."/>
            <person name="Setubal J.C."/>
            <person name="Kitajima J.P."/>
        </authorList>
    </citation>
    <scope>NUCLEOTIDE SEQUENCE [LARGE SCALE GENOMIC DNA]</scope>
    <source>
        <strain>Temecula1 / ATCC 700964</strain>
    </source>
</reference>
<organism>
    <name type="scientific">Xylella fastidiosa (strain Temecula1 / ATCC 700964)</name>
    <dbReference type="NCBI Taxonomy" id="183190"/>
    <lineage>
        <taxon>Bacteria</taxon>
        <taxon>Pseudomonadati</taxon>
        <taxon>Pseudomonadota</taxon>
        <taxon>Gammaproteobacteria</taxon>
        <taxon>Lysobacterales</taxon>
        <taxon>Lysobacteraceae</taxon>
        <taxon>Xylella</taxon>
    </lineage>
</organism>
<evidence type="ECO:0000255" key="1">
    <source>
        <dbReference type="HAMAP-Rule" id="MF_01858"/>
    </source>
</evidence>
<evidence type="ECO:0000305" key="2"/>
<gene>
    <name evidence="1" type="primary">rlmL</name>
    <name type="ordered locus">PD_2023</name>
</gene>
<sequence>MRFFVSCAKGLEYLLVDEVLALGAAGATATVAGVNVEGGLCDAQRLVLWSRLASRVLWPLAAFACADEDALYAGVAALPWVEHVLPGQTLAVDAHVSGEAITHARYAAQRVKDAVVDTLRDAGVVRPSVDVEHPDVRLNLSLRKGRATLSVDLGGRALHHRGWRQAPHAASLKEHLAAAVLLRAGWAKVYAEGGGLLDPMCGSGTLLIEGALMVADVAPGLSRYADPDAMSHVSVAERPVLLPSRWRGFDVVAWEALVVDAQQRARRGLAELRPVLHGSDIDPRALGAAFANARAAGVQDAIEFVVAGIDVLPAVSEPHGVVVCNAPYDVRLAADPGLYRHLGDALRRVVPRWRAALVCGSSTLAFATGLRADKKYQFFNGALECVLIVCDPVVPLAREAGGAQALSEGAQMAANRLRKNVQRLKKWRIRAGVECYRVYDADLPEYAAAIDVYQEVDGARRLFLHVQEYAAPASIPEGDVRRRRHELLAAVRAVFDVSVAQVALKTRQRGKGGSQYGCFAQRGEFFHVCEHGALLRVNLFDYLDTGLFLDHRPLRGRMAREAVGKRFLNVFCYTGVASVEAAVAGAAATTSVDLSSTYLHWCTDNFALNGQGGVRHRLVQADALAWLEAERGQYDVIFCDPPTFSNSARADDFDVQRDHVRLLRAAVARLTPGGVLYFSNNFRRFRLDVDAVAAFAQCEEISPVTIDLDFSRNTRIHRTWLLWR</sequence>
<name>RLMKL_XYLFT</name>
<accession>Q87A16</accession>
<comment type="function">
    <text evidence="1">Specifically methylates the guanine in position 2445 (m2G2445) and the guanine in position 2069 (m7G2069) of 23S rRNA.</text>
</comment>
<comment type="catalytic activity">
    <reaction evidence="1">
        <text>guanosine(2445) in 23S rRNA + S-adenosyl-L-methionine = N(2)-methylguanosine(2445) in 23S rRNA + S-adenosyl-L-homocysteine + H(+)</text>
        <dbReference type="Rhea" id="RHEA:42740"/>
        <dbReference type="Rhea" id="RHEA-COMP:10215"/>
        <dbReference type="Rhea" id="RHEA-COMP:10216"/>
        <dbReference type="ChEBI" id="CHEBI:15378"/>
        <dbReference type="ChEBI" id="CHEBI:57856"/>
        <dbReference type="ChEBI" id="CHEBI:59789"/>
        <dbReference type="ChEBI" id="CHEBI:74269"/>
        <dbReference type="ChEBI" id="CHEBI:74481"/>
        <dbReference type="EC" id="2.1.1.173"/>
    </reaction>
</comment>
<comment type="catalytic activity">
    <reaction evidence="1">
        <text>guanosine(2069) in 23S rRNA + S-adenosyl-L-methionine = N(2)-methylguanosine(2069) in 23S rRNA + S-adenosyl-L-homocysteine + H(+)</text>
        <dbReference type="Rhea" id="RHEA:43772"/>
        <dbReference type="Rhea" id="RHEA-COMP:10688"/>
        <dbReference type="Rhea" id="RHEA-COMP:10689"/>
        <dbReference type="ChEBI" id="CHEBI:15378"/>
        <dbReference type="ChEBI" id="CHEBI:57856"/>
        <dbReference type="ChEBI" id="CHEBI:59789"/>
        <dbReference type="ChEBI" id="CHEBI:74269"/>
        <dbReference type="ChEBI" id="CHEBI:74481"/>
        <dbReference type="EC" id="2.1.1.264"/>
    </reaction>
</comment>
<comment type="subcellular location">
    <subcellularLocation>
        <location evidence="1">Cytoplasm</location>
    </subcellularLocation>
</comment>
<comment type="similarity">
    <text evidence="1">Belongs to the methyltransferase superfamily. RlmKL family.</text>
</comment>
<comment type="sequence caution" evidence="2">
    <conflict type="erroneous initiation">
        <sequence resource="EMBL-CDS" id="AAO29847"/>
    </conflict>
    <text>Extended N-terminus.</text>
</comment>
<protein>
    <recommendedName>
        <fullName evidence="1">Ribosomal RNA large subunit methyltransferase K/L</fullName>
    </recommendedName>
    <domain>
        <recommendedName>
            <fullName evidence="1">23S rRNA m2G2445 methyltransferase</fullName>
            <ecNumber evidence="1">2.1.1.173</ecNumber>
        </recommendedName>
        <alternativeName>
            <fullName evidence="1">rRNA (guanine-N(2)-)-methyltransferase RlmL</fullName>
        </alternativeName>
    </domain>
    <domain>
        <recommendedName>
            <fullName evidence="1">23S rRNA m7G2069 methyltransferase</fullName>
            <ecNumber evidence="1">2.1.1.264</ecNumber>
        </recommendedName>
        <alternativeName>
            <fullName evidence="1">rRNA (guanine-N(7)-)-methyltransferase RlmK</fullName>
        </alternativeName>
    </domain>
</protein>
<proteinExistence type="inferred from homology"/>
<keyword id="KW-0963">Cytoplasm</keyword>
<keyword id="KW-0489">Methyltransferase</keyword>
<keyword id="KW-1185">Reference proteome</keyword>
<keyword id="KW-0694">RNA-binding</keyword>
<keyword id="KW-0698">rRNA processing</keyword>
<keyword id="KW-0949">S-adenosyl-L-methionine</keyword>
<keyword id="KW-0808">Transferase</keyword>
<dbReference type="EC" id="2.1.1.173" evidence="1"/>
<dbReference type="EC" id="2.1.1.264" evidence="1"/>
<dbReference type="EMBL" id="AE009442">
    <property type="protein sequence ID" value="AAO29847.1"/>
    <property type="status" value="ALT_INIT"/>
    <property type="molecule type" value="Genomic_DNA"/>
</dbReference>
<dbReference type="SMR" id="Q87A16"/>
<dbReference type="KEGG" id="xft:PD_2023"/>
<dbReference type="HOGENOM" id="CLU_014042_2_0_6"/>
<dbReference type="Proteomes" id="UP000002516">
    <property type="component" value="Chromosome"/>
</dbReference>
<dbReference type="GO" id="GO:0005737">
    <property type="term" value="C:cytoplasm"/>
    <property type="evidence" value="ECO:0007669"/>
    <property type="project" value="UniProtKB-SubCell"/>
</dbReference>
<dbReference type="GO" id="GO:0052915">
    <property type="term" value="F:23S rRNA (guanine(2445)-N(2))-methyltransferase activity"/>
    <property type="evidence" value="ECO:0007669"/>
    <property type="project" value="UniProtKB-UniRule"/>
</dbReference>
<dbReference type="GO" id="GO:0003723">
    <property type="term" value="F:RNA binding"/>
    <property type="evidence" value="ECO:0007669"/>
    <property type="project" value="UniProtKB-KW"/>
</dbReference>
<dbReference type="GO" id="GO:0070043">
    <property type="term" value="F:rRNA (guanine-N7-)-methyltransferase activity"/>
    <property type="evidence" value="ECO:0007669"/>
    <property type="project" value="UniProtKB-UniRule"/>
</dbReference>
<dbReference type="CDD" id="cd02440">
    <property type="entry name" value="AdoMet_MTases"/>
    <property type="match status" value="1"/>
</dbReference>
<dbReference type="CDD" id="cd11715">
    <property type="entry name" value="THUMP_AdoMetMT"/>
    <property type="match status" value="1"/>
</dbReference>
<dbReference type="FunFam" id="3.30.750.80:FF:000003">
    <property type="entry name" value="Ribosomal RNA large subunit methyltransferase K/L"/>
    <property type="match status" value="1"/>
</dbReference>
<dbReference type="Gene3D" id="3.30.2130.30">
    <property type="match status" value="1"/>
</dbReference>
<dbReference type="Gene3D" id="3.30.750.80">
    <property type="entry name" value="RNA methyltransferase domain (HRMD) like"/>
    <property type="match status" value="1"/>
</dbReference>
<dbReference type="Gene3D" id="3.40.50.150">
    <property type="entry name" value="Vaccinia Virus protein VP39"/>
    <property type="match status" value="2"/>
</dbReference>
<dbReference type="HAMAP" id="MF_01858">
    <property type="entry name" value="23SrRNA_methyltr_KL"/>
    <property type="match status" value="1"/>
</dbReference>
<dbReference type="InterPro" id="IPR017244">
    <property type="entry name" value="23SrRNA_methyltr_KL"/>
</dbReference>
<dbReference type="InterPro" id="IPR000241">
    <property type="entry name" value="RlmKL-like_Mtase"/>
</dbReference>
<dbReference type="InterPro" id="IPR053943">
    <property type="entry name" value="RlmKL-like_Mtase_CS"/>
</dbReference>
<dbReference type="InterPro" id="IPR054170">
    <property type="entry name" value="RlmL_1st"/>
</dbReference>
<dbReference type="InterPro" id="IPR019614">
    <property type="entry name" value="SAM-dep_methyl-trfase"/>
</dbReference>
<dbReference type="InterPro" id="IPR029063">
    <property type="entry name" value="SAM-dependent_MTases_sf"/>
</dbReference>
<dbReference type="InterPro" id="IPR004114">
    <property type="entry name" value="THUMP_dom"/>
</dbReference>
<dbReference type="NCBIfam" id="NF008748">
    <property type="entry name" value="PRK11783.1"/>
    <property type="match status" value="1"/>
</dbReference>
<dbReference type="PANTHER" id="PTHR47313">
    <property type="entry name" value="RIBOSOMAL RNA LARGE SUBUNIT METHYLTRANSFERASE K/L"/>
    <property type="match status" value="1"/>
</dbReference>
<dbReference type="PANTHER" id="PTHR47313:SF1">
    <property type="entry name" value="RIBOSOMAL RNA LARGE SUBUNIT METHYLTRANSFERASE K_L"/>
    <property type="match status" value="1"/>
</dbReference>
<dbReference type="Pfam" id="PF10672">
    <property type="entry name" value="Methyltrans_SAM"/>
    <property type="match status" value="1"/>
</dbReference>
<dbReference type="Pfam" id="PF22020">
    <property type="entry name" value="RlmL_1st"/>
    <property type="match status" value="1"/>
</dbReference>
<dbReference type="Pfam" id="PF02926">
    <property type="entry name" value="THUMP"/>
    <property type="match status" value="1"/>
</dbReference>
<dbReference type="Pfam" id="PF01170">
    <property type="entry name" value="UPF0020"/>
    <property type="match status" value="1"/>
</dbReference>
<dbReference type="PIRSF" id="PIRSF037618">
    <property type="entry name" value="RNA_Mtase_bacteria_prd"/>
    <property type="match status" value="1"/>
</dbReference>
<dbReference type="SMART" id="SM00981">
    <property type="entry name" value="THUMP"/>
    <property type="match status" value="1"/>
</dbReference>
<dbReference type="SUPFAM" id="SSF53335">
    <property type="entry name" value="S-adenosyl-L-methionine-dependent methyltransferases"/>
    <property type="match status" value="2"/>
</dbReference>
<dbReference type="PROSITE" id="PS51165">
    <property type="entry name" value="THUMP"/>
    <property type="match status" value="1"/>
</dbReference>
<dbReference type="PROSITE" id="PS01261">
    <property type="entry name" value="UPF0020"/>
    <property type="match status" value="1"/>
</dbReference>